<feature type="chain" id="PRO_0000119860" description="F-box and leucine-rich repeat protein 13">
    <location>
        <begin position="1"/>
        <end position="790"/>
    </location>
</feature>
<feature type="domain" description="F-box" evidence="4">
    <location>
        <begin position="237"/>
        <end position="283"/>
    </location>
</feature>
<feature type="repeat" description="LRR 1">
    <location>
        <begin position="503"/>
        <end position="525"/>
    </location>
</feature>
<feature type="repeat" description="LRR 2">
    <location>
        <begin position="531"/>
        <end position="552"/>
    </location>
</feature>
<feature type="repeat" description="LRR 3">
    <location>
        <begin position="557"/>
        <end position="579"/>
    </location>
</feature>
<feature type="repeat" description="LRR 4">
    <location>
        <begin position="582"/>
        <end position="602"/>
    </location>
</feature>
<feature type="repeat" description="LRR 5">
    <location>
        <begin position="606"/>
        <end position="628"/>
    </location>
</feature>
<feature type="repeat" description="LRR 6">
    <location>
        <begin position="632"/>
        <end position="657"/>
    </location>
</feature>
<feature type="splice variant" id="VSP_013006" description="In isoform 2." evidence="6">
    <original>Q</original>
    <variation>QISVQGFRNIASSCTGIVHLTINDMPTLTDNCVK</variation>
    <location>
        <position position="420"/>
    </location>
</feature>
<feature type="splice variant" id="VSP_013007" description="In isoform 2." evidence="6">
    <original>ITDAGMEILSARCHYL</original>
    <variation>VCMAAGALTGSRQGCT</variation>
    <location>
        <begin position="670"/>
        <end position="685"/>
    </location>
</feature>
<feature type="splice variant" id="VSP_013008" description="In isoform 2." evidence="6">
    <location>
        <begin position="686"/>
        <end position="790"/>
    </location>
</feature>
<feature type="sequence conflict" description="In Ref. 1; BAC26821." evidence="8" ref="1">
    <original>L</original>
    <variation>W</variation>
    <location>
        <position position="173"/>
    </location>
</feature>
<feature type="sequence conflict" description="In Ref. 1; BAC26515." evidence="8" ref="1">
    <original>R</original>
    <variation>K</variation>
    <location>
        <position position="377"/>
    </location>
</feature>
<feature type="sequence conflict" description="In Ref. 1; BAC26515." evidence="8" ref="1">
    <original>R</original>
    <variation>E</variation>
    <location>
        <position position="391"/>
    </location>
</feature>
<reference key="1">
    <citation type="journal article" date="2005" name="Science">
        <title>The transcriptional landscape of the mammalian genome.</title>
        <authorList>
            <person name="Carninci P."/>
            <person name="Kasukawa T."/>
            <person name="Katayama S."/>
            <person name="Gough J."/>
            <person name="Frith M.C."/>
            <person name="Maeda N."/>
            <person name="Oyama R."/>
            <person name="Ravasi T."/>
            <person name="Lenhard B."/>
            <person name="Wells C."/>
            <person name="Kodzius R."/>
            <person name="Shimokawa K."/>
            <person name="Bajic V.B."/>
            <person name="Brenner S.E."/>
            <person name="Batalov S."/>
            <person name="Forrest A.R."/>
            <person name="Zavolan M."/>
            <person name="Davis M.J."/>
            <person name="Wilming L.G."/>
            <person name="Aidinis V."/>
            <person name="Allen J.E."/>
            <person name="Ambesi-Impiombato A."/>
            <person name="Apweiler R."/>
            <person name="Aturaliya R.N."/>
            <person name="Bailey T.L."/>
            <person name="Bansal M."/>
            <person name="Baxter L."/>
            <person name="Beisel K.W."/>
            <person name="Bersano T."/>
            <person name="Bono H."/>
            <person name="Chalk A.M."/>
            <person name="Chiu K.P."/>
            <person name="Choudhary V."/>
            <person name="Christoffels A."/>
            <person name="Clutterbuck D.R."/>
            <person name="Crowe M.L."/>
            <person name="Dalla E."/>
            <person name="Dalrymple B.P."/>
            <person name="de Bono B."/>
            <person name="Della Gatta G."/>
            <person name="di Bernardo D."/>
            <person name="Down T."/>
            <person name="Engstrom P."/>
            <person name="Fagiolini M."/>
            <person name="Faulkner G."/>
            <person name="Fletcher C.F."/>
            <person name="Fukushima T."/>
            <person name="Furuno M."/>
            <person name="Futaki S."/>
            <person name="Gariboldi M."/>
            <person name="Georgii-Hemming P."/>
            <person name="Gingeras T.R."/>
            <person name="Gojobori T."/>
            <person name="Green R.E."/>
            <person name="Gustincich S."/>
            <person name="Harbers M."/>
            <person name="Hayashi Y."/>
            <person name="Hensch T.K."/>
            <person name="Hirokawa N."/>
            <person name="Hill D."/>
            <person name="Huminiecki L."/>
            <person name="Iacono M."/>
            <person name="Ikeo K."/>
            <person name="Iwama A."/>
            <person name="Ishikawa T."/>
            <person name="Jakt M."/>
            <person name="Kanapin A."/>
            <person name="Katoh M."/>
            <person name="Kawasawa Y."/>
            <person name="Kelso J."/>
            <person name="Kitamura H."/>
            <person name="Kitano H."/>
            <person name="Kollias G."/>
            <person name="Krishnan S.P."/>
            <person name="Kruger A."/>
            <person name="Kummerfeld S.K."/>
            <person name="Kurochkin I.V."/>
            <person name="Lareau L.F."/>
            <person name="Lazarevic D."/>
            <person name="Lipovich L."/>
            <person name="Liu J."/>
            <person name="Liuni S."/>
            <person name="McWilliam S."/>
            <person name="Madan Babu M."/>
            <person name="Madera M."/>
            <person name="Marchionni L."/>
            <person name="Matsuda H."/>
            <person name="Matsuzawa S."/>
            <person name="Miki H."/>
            <person name="Mignone F."/>
            <person name="Miyake S."/>
            <person name="Morris K."/>
            <person name="Mottagui-Tabar S."/>
            <person name="Mulder N."/>
            <person name="Nakano N."/>
            <person name="Nakauchi H."/>
            <person name="Ng P."/>
            <person name="Nilsson R."/>
            <person name="Nishiguchi S."/>
            <person name="Nishikawa S."/>
            <person name="Nori F."/>
            <person name="Ohara O."/>
            <person name="Okazaki Y."/>
            <person name="Orlando V."/>
            <person name="Pang K.C."/>
            <person name="Pavan W.J."/>
            <person name="Pavesi G."/>
            <person name="Pesole G."/>
            <person name="Petrovsky N."/>
            <person name="Piazza S."/>
            <person name="Reed J."/>
            <person name="Reid J.F."/>
            <person name="Ring B.Z."/>
            <person name="Ringwald M."/>
            <person name="Rost B."/>
            <person name="Ruan Y."/>
            <person name="Salzberg S.L."/>
            <person name="Sandelin A."/>
            <person name="Schneider C."/>
            <person name="Schoenbach C."/>
            <person name="Sekiguchi K."/>
            <person name="Semple C.A."/>
            <person name="Seno S."/>
            <person name="Sessa L."/>
            <person name="Sheng Y."/>
            <person name="Shibata Y."/>
            <person name="Shimada H."/>
            <person name="Shimada K."/>
            <person name="Silva D."/>
            <person name="Sinclair B."/>
            <person name="Sperling S."/>
            <person name="Stupka E."/>
            <person name="Sugiura K."/>
            <person name="Sultana R."/>
            <person name="Takenaka Y."/>
            <person name="Taki K."/>
            <person name="Tammoja K."/>
            <person name="Tan S.L."/>
            <person name="Tang S."/>
            <person name="Taylor M.S."/>
            <person name="Tegner J."/>
            <person name="Teichmann S.A."/>
            <person name="Ueda H.R."/>
            <person name="van Nimwegen E."/>
            <person name="Verardo R."/>
            <person name="Wei C.L."/>
            <person name="Yagi K."/>
            <person name="Yamanishi H."/>
            <person name="Zabarovsky E."/>
            <person name="Zhu S."/>
            <person name="Zimmer A."/>
            <person name="Hide W."/>
            <person name="Bult C."/>
            <person name="Grimmond S.M."/>
            <person name="Teasdale R.D."/>
            <person name="Liu E.T."/>
            <person name="Brusic V."/>
            <person name="Quackenbush J."/>
            <person name="Wahlestedt C."/>
            <person name="Mattick J.S."/>
            <person name="Hume D.A."/>
            <person name="Kai C."/>
            <person name="Sasaki D."/>
            <person name="Tomaru Y."/>
            <person name="Fukuda S."/>
            <person name="Kanamori-Katayama M."/>
            <person name="Suzuki M."/>
            <person name="Aoki J."/>
            <person name="Arakawa T."/>
            <person name="Iida J."/>
            <person name="Imamura K."/>
            <person name="Itoh M."/>
            <person name="Kato T."/>
            <person name="Kawaji H."/>
            <person name="Kawagashira N."/>
            <person name="Kawashima T."/>
            <person name="Kojima M."/>
            <person name="Kondo S."/>
            <person name="Konno H."/>
            <person name="Nakano K."/>
            <person name="Ninomiya N."/>
            <person name="Nishio T."/>
            <person name="Okada M."/>
            <person name="Plessy C."/>
            <person name="Shibata K."/>
            <person name="Shiraki T."/>
            <person name="Suzuki S."/>
            <person name="Tagami M."/>
            <person name="Waki K."/>
            <person name="Watahiki A."/>
            <person name="Okamura-Oho Y."/>
            <person name="Suzuki H."/>
            <person name="Kawai J."/>
            <person name="Hayashizaki Y."/>
        </authorList>
    </citation>
    <scope>NUCLEOTIDE SEQUENCE [LARGE SCALE MRNA] (ISOFORMS 1 AND 2)</scope>
    <source>
        <strain>C57BL/6J</strain>
        <tissue>Testis</tissue>
    </source>
</reference>
<reference key="2">
    <citation type="journal article" date="2017" name="Proc. Natl. Acad. Sci. U.S.A.">
        <title>TCTE1 is a conserved component of the dynein regulatory complex and is required for motility and metabolism in mouse spermatozoa.</title>
        <authorList>
            <person name="Castaneda J.M."/>
            <person name="Hua R."/>
            <person name="Miyata H."/>
            <person name="Oji A."/>
            <person name="Guo Y."/>
            <person name="Cheng Y."/>
            <person name="Zhou T."/>
            <person name="Guo X."/>
            <person name="Cui Y."/>
            <person name="Shen B."/>
            <person name="Wang Z."/>
            <person name="Hu Z."/>
            <person name="Zhou Z."/>
            <person name="Sha J."/>
            <person name="Prunskaite-Hyyrylainen R."/>
            <person name="Yu Z."/>
            <person name="Ramirez-Solis R."/>
            <person name="Ikawa M."/>
            <person name="Matzuk M.M."/>
            <person name="Liu M."/>
        </authorList>
    </citation>
    <scope>INTERACTION WITH TCTE1</scope>
</reference>
<name>FXL13_MOUSE</name>
<keyword id="KW-0025">Alternative splicing</keyword>
<keyword id="KW-0966">Cell projection</keyword>
<keyword id="KW-0969">Cilium</keyword>
<keyword id="KW-0963">Cytoplasm</keyword>
<keyword id="KW-0206">Cytoskeleton</keyword>
<keyword id="KW-0282">Flagellum</keyword>
<keyword id="KW-0433">Leucine-rich repeat</keyword>
<keyword id="KW-1185">Reference proteome</keyword>
<keyword id="KW-0677">Repeat</keyword>
<keyword id="KW-0833">Ubl conjugation pathway</keyword>
<comment type="function">
    <text evidence="2 3">Substrate-recognition component of the SCF (SKP1-CUL1-F-box protein)-type E3 ubiquitin ligase complex. Component of the nexin-dynein regulatory complex (N-DRC), a key regulator of ciliary/flagellar motility which maintains the alignment and integrity of the distal axoneme and regulates microtubule sliding in motile axonemes. Specifically targets CEP192 isoform 3 for ubiquitin-mediated proteolysis and thereby acts as a regulator of microtubule nucleation activity.</text>
</comment>
<comment type="subunit">
    <text evidence="1 2 5">Component of the nexin-dynein regulatory complex (N-DRC). Directly interacts with SKP1 and CUL1 (By similarity). Interacts with TCTE1/DRC5 (PubMed:28630322).</text>
</comment>
<comment type="subcellular location">
    <subcellularLocation>
        <location evidence="2">Cytoplasm</location>
        <location evidence="2">Cytoskeleton</location>
        <location evidence="2">Flagellum axoneme</location>
    </subcellularLocation>
    <subcellularLocation>
        <location evidence="3">Cytoplasm</location>
        <location evidence="3">Cytoskeleton</location>
        <location evidence="3">Microtubule organizing center</location>
        <location evidence="3">Centrosome</location>
    </subcellularLocation>
</comment>
<comment type="alternative products">
    <event type="alternative splicing"/>
    <isoform>
        <id>Q8CDU4-1</id>
        <name>1</name>
        <sequence type="displayed"/>
    </isoform>
    <isoform>
        <id>Q8CDU4-2</id>
        <name>2</name>
        <sequence type="described" ref="VSP_013006 VSP_013007 VSP_013008"/>
    </isoform>
</comment>
<comment type="similarity">
    <text evidence="8">Belongs to the DRC6 family.</text>
</comment>
<comment type="sequence caution" evidence="8">
    <conflict type="frameshift">
        <sequence resource="EMBL-CDS" id="BAC26515"/>
    </conflict>
</comment>
<comment type="sequence caution" evidence="8">
    <conflict type="frameshift">
        <sequence resource="EMBL-CDS" id="BAC26821"/>
    </conflict>
</comment>
<gene>
    <name type="primary">Fbxl13</name>
    <name evidence="7" type="synonym">Drc6</name>
</gene>
<accession>Q8CDU4</accession>
<accession>Q8CDE9</accession>
<proteinExistence type="evidence at protein level"/>
<organism>
    <name type="scientific">Mus musculus</name>
    <name type="common">Mouse</name>
    <dbReference type="NCBI Taxonomy" id="10090"/>
    <lineage>
        <taxon>Eukaryota</taxon>
        <taxon>Metazoa</taxon>
        <taxon>Chordata</taxon>
        <taxon>Craniata</taxon>
        <taxon>Vertebrata</taxon>
        <taxon>Euteleostomi</taxon>
        <taxon>Mammalia</taxon>
        <taxon>Eutheria</taxon>
        <taxon>Euarchontoglires</taxon>
        <taxon>Glires</taxon>
        <taxon>Rodentia</taxon>
        <taxon>Myomorpha</taxon>
        <taxon>Muroidea</taxon>
        <taxon>Muridae</taxon>
        <taxon>Murinae</taxon>
        <taxon>Mus</taxon>
        <taxon>Mus</taxon>
    </lineage>
</organism>
<dbReference type="EMBL" id="AK029566">
    <property type="protein sequence ID" value="BAC26515.1"/>
    <property type="status" value="ALT_FRAME"/>
    <property type="molecule type" value="mRNA"/>
</dbReference>
<dbReference type="EMBL" id="AK030172">
    <property type="protein sequence ID" value="BAC26821.1"/>
    <property type="status" value="ALT_FRAME"/>
    <property type="molecule type" value="mRNA"/>
</dbReference>
<dbReference type="CCDS" id="CCDS51429.1">
    <molecule id="Q8CDU4-1"/>
</dbReference>
<dbReference type="RefSeq" id="NP_796050.2">
    <molecule id="Q8CDU4-1"/>
    <property type="nucleotide sequence ID" value="NM_177076.4"/>
</dbReference>
<dbReference type="SMR" id="Q8CDU4"/>
<dbReference type="BioGRID" id="235772">
    <property type="interactions" value="1"/>
</dbReference>
<dbReference type="FunCoup" id="Q8CDU4">
    <property type="interactions" value="17"/>
</dbReference>
<dbReference type="STRING" id="10090.ENSMUSP00000052716"/>
<dbReference type="PhosphoSitePlus" id="Q8CDU4"/>
<dbReference type="PaxDb" id="10090-ENSMUSP00000052716"/>
<dbReference type="ProteomicsDB" id="267533">
    <molecule id="Q8CDU4-1"/>
</dbReference>
<dbReference type="ProteomicsDB" id="267534">
    <molecule id="Q8CDU4-2"/>
</dbReference>
<dbReference type="Antibodypedia" id="31140">
    <property type="antibodies" value="104 antibodies from 20 providers"/>
</dbReference>
<dbReference type="DNASU" id="320118"/>
<dbReference type="Ensembl" id="ENSMUST00000051358.11">
    <molecule id="Q8CDU4-1"/>
    <property type="protein sequence ID" value="ENSMUSP00000052716.5"/>
    <property type="gene ID" value="ENSMUSG00000048520.17"/>
</dbReference>
<dbReference type="GeneID" id="320118"/>
<dbReference type="KEGG" id="mmu:320118"/>
<dbReference type="UCSC" id="uc008wop.2">
    <molecule id="Q8CDU4-1"/>
    <property type="organism name" value="mouse"/>
</dbReference>
<dbReference type="UCSC" id="uc008woq.1">
    <molecule id="Q8CDU4-2"/>
    <property type="organism name" value="mouse"/>
</dbReference>
<dbReference type="AGR" id="MGI:2443416"/>
<dbReference type="CTD" id="222235"/>
<dbReference type="MGI" id="MGI:2443416">
    <property type="gene designation" value="Fbxl13"/>
</dbReference>
<dbReference type="VEuPathDB" id="HostDB:ENSMUSG00000048520"/>
<dbReference type="eggNOG" id="KOG1947">
    <property type="taxonomic scope" value="Eukaryota"/>
</dbReference>
<dbReference type="GeneTree" id="ENSGT00940000160224"/>
<dbReference type="InParanoid" id="Q8CDU4"/>
<dbReference type="OMA" id="ARCHYLH"/>
<dbReference type="OrthoDB" id="61560at2759"/>
<dbReference type="PhylomeDB" id="Q8CDU4"/>
<dbReference type="TreeFam" id="TF329711"/>
<dbReference type="Reactome" id="R-MMU-8951664">
    <property type="pathway name" value="Neddylation"/>
</dbReference>
<dbReference type="Reactome" id="R-MMU-983168">
    <property type="pathway name" value="Antigen processing: Ubiquitination &amp; Proteasome degradation"/>
</dbReference>
<dbReference type="BioGRID-ORCS" id="320118">
    <property type="hits" value="2 hits in 79 CRISPR screens"/>
</dbReference>
<dbReference type="ChiTaRS" id="Fbxl13">
    <property type="organism name" value="mouse"/>
</dbReference>
<dbReference type="PRO" id="PR:Q8CDU4"/>
<dbReference type="Proteomes" id="UP000000589">
    <property type="component" value="Chromosome 5"/>
</dbReference>
<dbReference type="RNAct" id="Q8CDU4">
    <property type="molecule type" value="protein"/>
</dbReference>
<dbReference type="Bgee" id="ENSMUSG00000048520">
    <property type="expression patterns" value="Expressed in spermatid and 16 other cell types or tissues"/>
</dbReference>
<dbReference type="ExpressionAtlas" id="Q8CDU4">
    <property type="expression patterns" value="baseline and differential"/>
</dbReference>
<dbReference type="GO" id="GO:0005813">
    <property type="term" value="C:centrosome"/>
    <property type="evidence" value="ECO:0007669"/>
    <property type="project" value="UniProtKB-SubCell"/>
</dbReference>
<dbReference type="GO" id="GO:0005737">
    <property type="term" value="C:cytoplasm"/>
    <property type="evidence" value="ECO:0007669"/>
    <property type="project" value="UniProtKB-KW"/>
</dbReference>
<dbReference type="GO" id="GO:0031514">
    <property type="term" value="C:motile cilium"/>
    <property type="evidence" value="ECO:0007669"/>
    <property type="project" value="UniProtKB-KW"/>
</dbReference>
<dbReference type="CDD" id="cd22977">
    <property type="entry name" value="DD_FBXL13"/>
    <property type="match status" value="1"/>
</dbReference>
<dbReference type="FunFam" id="3.80.10.10:FF:000266">
    <property type="entry name" value="F-box and leucine rich repeat protein 13"/>
    <property type="match status" value="1"/>
</dbReference>
<dbReference type="FunFam" id="3.80.10.10:FF:000291">
    <property type="entry name" value="F-box and leucine rich repeat protein 13"/>
    <property type="match status" value="1"/>
</dbReference>
<dbReference type="Gene3D" id="3.80.10.10">
    <property type="entry name" value="Ribonuclease Inhibitor"/>
    <property type="match status" value="3"/>
</dbReference>
<dbReference type="InterPro" id="IPR036047">
    <property type="entry name" value="F-box-like_dom_sf"/>
</dbReference>
<dbReference type="InterPro" id="IPR001810">
    <property type="entry name" value="F-box_dom"/>
</dbReference>
<dbReference type="InterPro" id="IPR001611">
    <property type="entry name" value="Leu-rich_rpt"/>
</dbReference>
<dbReference type="InterPro" id="IPR006553">
    <property type="entry name" value="Leu-rich_rpt_Cys-con_subtyp"/>
</dbReference>
<dbReference type="InterPro" id="IPR032675">
    <property type="entry name" value="LRR_dom_sf"/>
</dbReference>
<dbReference type="PANTHER" id="PTHR13318:SF190">
    <property type="entry name" value="PARTNER OF PAIRED, ISOFORM B"/>
    <property type="match status" value="1"/>
</dbReference>
<dbReference type="PANTHER" id="PTHR13318">
    <property type="entry name" value="PARTNER OF PAIRED, ISOFORM B-RELATED"/>
    <property type="match status" value="1"/>
</dbReference>
<dbReference type="Pfam" id="PF12937">
    <property type="entry name" value="F-box-like"/>
    <property type="match status" value="1"/>
</dbReference>
<dbReference type="Pfam" id="PF13516">
    <property type="entry name" value="LRR_6"/>
    <property type="match status" value="3"/>
</dbReference>
<dbReference type="SMART" id="SM00256">
    <property type="entry name" value="FBOX"/>
    <property type="match status" value="1"/>
</dbReference>
<dbReference type="SMART" id="SM00367">
    <property type="entry name" value="LRR_CC"/>
    <property type="match status" value="14"/>
</dbReference>
<dbReference type="SUPFAM" id="SSF81383">
    <property type="entry name" value="F-box domain"/>
    <property type="match status" value="1"/>
</dbReference>
<dbReference type="SUPFAM" id="SSF52047">
    <property type="entry name" value="RNI-like"/>
    <property type="match status" value="2"/>
</dbReference>
<dbReference type="PROSITE" id="PS50181">
    <property type="entry name" value="FBOX"/>
    <property type="match status" value="1"/>
</dbReference>
<evidence type="ECO:0000250" key="1"/>
<evidence type="ECO:0000250" key="2">
    <source>
        <dbReference type="UniProtKB" id="A8JHD7"/>
    </source>
</evidence>
<evidence type="ECO:0000250" key="3">
    <source>
        <dbReference type="UniProtKB" id="Q8NEE6"/>
    </source>
</evidence>
<evidence type="ECO:0000255" key="4">
    <source>
        <dbReference type="PROSITE-ProRule" id="PRU00080"/>
    </source>
</evidence>
<evidence type="ECO:0000269" key="5">
    <source>
    </source>
</evidence>
<evidence type="ECO:0000303" key="6">
    <source>
    </source>
</evidence>
<evidence type="ECO:0000303" key="7">
    <source>
    </source>
</evidence>
<evidence type="ECO:0000305" key="8"/>
<sequence length="790" mass="90657">MASLRSATPRLRSYFRDKYIPQICEALLCGLLVTCPEDPLKYLEHMILAIIKRGLENLLWDTCIHPSLKSRVRRLSETYLDELFGLDDQLVTPELMIKACTFYTGHLVKTHFSGWKKVAIPRANQEEIMAEKMDKAIAHDNFRCQKYIFNRWFAYTVMSRERLITTLLRLRHLFYMQRQRIILAKWKERARHKSKTREDDLISKHELQLKKWKFKLGKPISLEGSLSDIAVENRRIAFDISVLPEQAILQIFLYLTFKDMMACSRVNRSWMAMIQRGSLWNSIDFSTVKNIADKCVVTTLQKWRLNVLRLNFRGCDFRTKTLKAVSHCKNLQELNVSDCQSFTDESMRHISEGCPGVLYLNLSNTTITNRTMRLLPRYFHNLQNLSLAYCRKFTDKGLQYLNLGNGCHKLIYLDLSGCTQVLVEKCPRISSVVLIGSPHISDSAFKALSSCDLKKIRFEGNKRISDACFKSIDRNYPGINHIYMVDCKGLTDSSLKSLSLLKQLTVLNLTNCIRIGDIGLKHFFDGPASIRLRELNLTNCSLLGDSSVIRLSERCPNLHYLNLRNCEHLTDLAIEYIASMLSLISVDLSGTLISNEGMTILSRHRKLREVSVSDCVNITDFGIRAYCKTSLLLEHLDVSYCSQLTDDIIKTIAIFCTRITSLNIAGCPKITDAGMEILSARCHYLHILDISGCIQLTDQIIQDLQIGCKQLRILKMQFCKSISPAAAQKMSSVVQHQEYNSDNPPHWFGYDSEGNPLDKIHSRVQLRTYSKLIVKEPFSIDEEDPDSKHQ</sequence>
<protein>
    <recommendedName>
        <fullName>F-box and leucine-rich repeat protein 13</fullName>
    </recommendedName>
    <alternativeName>
        <fullName>Dynein regulatory complex subunit 6</fullName>
    </alternativeName>
    <alternativeName>
        <fullName>F-box/LRR-repeat protein 13</fullName>
    </alternativeName>
</protein>